<protein>
    <recommendedName>
        <fullName evidence="1">Bifunctional protein GlmU</fullName>
    </recommendedName>
    <domain>
        <recommendedName>
            <fullName evidence="1">UDP-N-acetylglucosamine pyrophosphorylase</fullName>
            <ecNumber evidence="1">2.7.7.23</ecNumber>
        </recommendedName>
        <alternativeName>
            <fullName evidence="1">N-acetylglucosamine-1-phosphate uridyltransferase</fullName>
        </alternativeName>
    </domain>
    <domain>
        <recommendedName>
            <fullName evidence="1">Glucosamine-1-phosphate N-acetyltransferase</fullName>
            <ecNumber evidence="1">2.3.1.157</ecNumber>
        </recommendedName>
    </domain>
</protein>
<proteinExistence type="inferred from homology"/>
<accession>P0ACC8</accession>
<accession>P17114</accession>
<accession>P76746</accession>
<dbReference type="EC" id="2.7.7.23" evidence="1"/>
<dbReference type="EC" id="2.3.1.157" evidence="1"/>
<dbReference type="EMBL" id="AE005174">
    <property type="protein sequence ID" value="AAG58933.1"/>
    <property type="molecule type" value="Genomic_DNA"/>
</dbReference>
<dbReference type="EMBL" id="BA000007">
    <property type="protein sequence ID" value="BAB38095.1"/>
    <property type="molecule type" value="Genomic_DNA"/>
</dbReference>
<dbReference type="PIR" id="H91212">
    <property type="entry name" value="H91212"/>
</dbReference>
<dbReference type="RefSeq" id="NP_312699.1">
    <property type="nucleotide sequence ID" value="NC_002695.1"/>
</dbReference>
<dbReference type="RefSeq" id="WP_000933736.1">
    <property type="nucleotide sequence ID" value="NZ_VOAI01000011.1"/>
</dbReference>
<dbReference type="SMR" id="P0ACC8"/>
<dbReference type="STRING" id="155864.Z5228"/>
<dbReference type="GeneID" id="75205448"/>
<dbReference type="GeneID" id="915349"/>
<dbReference type="KEGG" id="ece:Z5228"/>
<dbReference type="KEGG" id="ecs:ECs_4672"/>
<dbReference type="PATRIC" id="fig|386585.9.peg.4877"/>
<dbReference type="eggNOG" id="COG1207">
    <property type="taxonomic scope" value="Bacteria"/>
</dbReference>
<dbReference type="HOGENOM" id="CLU_029499_15_2_6"/>
<dbReference type="OMA" id="TAIVEHK"/>
<dbReference type="UniPathway" id="UPA00113">
    <property type="reaction ID" value="UER00532"/>
</dbReference>
<dbReference type="UniPathway" id="UPA00113">
    <property type="reaction ID" value="UER00533"/>
</dbReference>
<dbReference type="UniPathway" id="UPA00973"/>
<dbReference type="Proteomes" id="UP000000558">
    <property type="component" value="Chromosome"/>
</dbReference>
<dbReference type="Proteomes" id="UP000002519">
    <property type="component" value="Chromosome"/>
</dbReference>
<dbReference type="GO" id="GO:0005737">
    <property type="term" value="C:cytoplasm"/>
    <property type="evidence" value="ECO:0007669"/>
    <property type="project" value="UniProtKB-SubCell"/>
</dbReference>
<dbReference type="GO" id="GO:0016020">
    <property type="term" value="C:membrane"/>
    <property type="evidence" value="ECO:0007669"/>
    <property type="project" value="GOC"/>
</dbReference>
<dbReference type="GO" id="GO:0019134">
    <property type="term" value="F:glucosamine-1-phosphate N-acetyltransferase activity"/>
    <property type="evidence" value="ECO:0007669"/>
    <property type="project" value="UniProtKB-UniRule"/>
</dbReference>
<dbReference type="GO" id="GO:0000287">
    <property type="term" value="F:magnesium ion binding"/>
    <property type="evidence" value="ECO:0007669"/>
    <property type="project" value="UniProtKB-UniRule"/>
</dbReference>
<dbReference type="GO" id="GO:0003977">
    <property type="term" value="F:UDP-N-acetylglucosamine diphosphorylase activity"/>
    <property type="evidence" value="ECO:0007669"/>
    <property type="project" value="UniProtKB-UniRule"/>
</dbReference>
<dbReference type="GO" id="GO:0000902">
    <property type="term" value="P:cell morphogenesis"/>
    <property type="evidence" value="ECO:0007669"/>
    <property type="project" value="UniProtKB-UniRule"/>
</dbReference>
<dbReference type="GO" id="GO:0071555">
    <property type="term" value="P:cell wall organization"/>
    <property type="evidence" value="ECO:0007669"/>
    <property type="project" value="UniProtKB-KW"/>
</dbReference>
<dbReference type="GO" id="GO:0009245">
    <property type="term" value="P:lipid A biosynthetic process"/>
    <property type="evidence" value="ECO:0007669"/>
    <property type="project" value="UniProtKB-UniRule"/>
</dbReference>
<dbReference type="GO" id="GO:0009252">
    <property type="term" value="P:peptidoglycan biosynthetic process"/>
    <property type="evidence" value="ECO:0007669"/>
    <property type="project" value="UniProtKB-UniRule"/>
</dbReference>
<dbReference type="GO" id="GO:0008360">
    <property type="term" value="P:regulation of cell shape"/>
    <property type="evidence" value="ECO:0007669"/>
    <property type="project" value="UniProtKB-KW"/>
</dbReference>
<dbReference type="GO" id="GO:0006048">
    <property type="term" value="P:UDP-N-acetylglucosamine biosynthetic process"/>
    <property type="evidence" value="ECO:0007669"/>
    <property type="project" value="UniProtKB-UniPathway"/>
</dbReference>
<dbReference type="CDD" id="cd02540">
    <property type="entry name" value="GT2_GlmU_N_bac"/>
    <property type="match status" value="1"/>
</dbReference>
<dbReference type="CDD" id="cd03353">
    <property type="entry name" value="LbH_GlmU_C"/>
    <property type="match status" value="1"/>
</dbReference>
<dbReference type="FunFam" id="2.160.10.10:FF:000011">
    <property type="entry name" value="Bifunctional protein GlmU"/>
    <property type="match status" value="1"/>
</dbReference>
<dbReference type="FunFam" id="3.90.550.10:FF:000006">
    <property type="entry name" value="Bifunctional protein GlmU"/>
    <property type="match status" value="1"/>
</dbReference>
<dbReference type="Gene3D" id="2.160.10.10">
    <property type="entry name" value="Hexapeptide repeat proteins"/>
    <property type="match status" value="1"/>
</dbReference>
<dbReference type="Gene3D" id="3.90.550.10">
    <property type="entry name" value="Spore Coat Polysaccharide Biosynthesis Protein SpsA, Chain A"/>
    <property type="match status" value="1"/>
</dbReference>
<dbReference type="HAMAP" id="MF_01631">
    <property type="entry name" value="GlmU"/>
    <property type="match status" value="1"/>
</dbReference>
<dbReference type="InterPro" id="IPR005882">
    <property type="entry name" value="Bifunctional_GlmU"/>
</dbReference>
<dbReference type="InterPro" id="IPR050065">
    <property type="entry name" value="GlmU-like"/>
</dbReference>
<dbReference type="InterPro" id="IPR038009">
    <property type="entry name" value="GlmU_C_LbH"/>
</dbReference>
<dbReference type="InterPro" id="IPR001451">
    <property type="entry name" value="Hexapep"/>
</dbReference>
<dbReference type="InterPro" id="IPR018357">
    <property type="entry name" value="Hexapep_transf_CS"/>
</dbReference>
<dbReference type="InterPro" id="IPR025877">
    <property type="entry name" value="MobA-like_NTP_Trfase"/>
</dbReference>
<dbReference type="InterPro" id="IPR029044">
    <property type="entry name" value="Nucleotide-diphossugar_trans"/>
</dbReference>
<dbReference type="InterPro" id="IPR011004">
    <property type="entry name" value="Trimer_LpxA-like_sf"/>
</dbReference>
<dbReference type="NCBIfam" id="TIGR01173">
    <property type="entry name" value="glmU"/>
    <property type="match status" value="1"/>
</dbReference>
<dbReference type="NCBIfam" id="NF006986">
    <property type="entry name" value="PRK09451.1"/>
    <property type="match status" value="1"/>
</dbReference>
<dbReference type="PANTHER" id="PTHR43584:SF3">
    <property type="entry name" value="BIFUNCTIONAL PROTEIN GLMU"/>
    <property type="match status" value="1"/>
</dbReference>
<dbReference type="PANTHER" id="PTHR43584">
    <property type="entry name" value="NUCLEOTIDYL TRANSFERASE"/>
    <property type="match status" value="1"/>
</dbReference>
<dbReference type="Pfam" id="PF00132">
    <property type="entry name" value="Hexapep"/>
    <property type="match status" value="1"/>
</dbReference>
<dbReference type="Pfam" id="PF12804">
    <property type="entry name" value="NTP_transf_3"/>
    <property type="match status" value="1"/>
</dbReference>
<dbReference type="SUPFAM" id="SSF53448">
    <property type="entry name" value="Nucleotide-diphospho-sugar transferases"/>
    <property type="match status" value="1"/>
</dbReference>
<dbReference type="SUPFAM" id="SSF51161">
    <property type="entry name" value="Trimeric LpxA-like enzymes"/>
    <property type="match status" value="1"/>
</dbReference>
<dbReference type="PROSITE" id="PS00101">
    <property type="entry name" value="HEXAPEP_TRANSFERASES"/>
    <property type="match status" value="1"/>
</dbReference>
<organism>
    <name type="scientific">Escherichia coli O157:H7</name>
    <dbReference type="NCBI Taxonomy" id="83334"/>
    <lineage>
        <taxon>Bacteria</taxon>
        <taxon>Pseudomonadati</taxon>
        <taxon>Pseudomonadota</taxon>
        <taxon>Gammaproteobacteria</taxon>
        <taxon>Enterobacterales</taxon>
        <taxon>Enterobacteriaceae</taxon>
        <taxon>Escherichia</taxon>
    </lineage>
</organism>
<sequence length="456" mass="49190">MLNNAMSVVILAAGKGTRMYSDLPKVLHTLAGKAMVQHVIDAANELGAAHVHLVYGHGGDLLKQALKDDNLNWVLQAEQLGTGHAMQQAAPFFADDEDILMLYGDVPLISVETLQRLRDAKPQGGIGLLTVKLDDPTGYGRITRENGKVTGIVEHKDATDEQRQIQEINTGILIANGADMKRWLAKLTNNNAQGEYYITDIIALAYQEGREIVAVHPQRLSEVEGVNNRLQLSRLERVYQSEQAEKLLLAGVMLRDPARFDLRGTLTHGRDVEIDTNVIIEGNVTLGHRVKIGTGCVIKNSVIGDDCEISPYTVVEDANLAAACTIGPFARLRPGAELLEGAHVGNFVEMKKARLGKGSKAGHLTYLGDAEIGDNVNIGAGTITCNYDGANKFKTIIGDDVFVGSDTQLVAPVTVGKGATIAAGTTVTRNVGENALAISRVPQTQKEGWRRPVKKK</sequence>
<reference key="1">
    <citation type="journal article" date="2001" name="Nature">
        <title>Genome sequence of enterohaemorrhagic Escherichia coli O157:H7.</title>
        <authorList>
            <person name="Perna N.T."/>
            <person name="Plunkett G. III"/>
            <person name="Burland V."/>
            <person name="Mau B."/>
            <person name="Glasner J.D."/>
            <person name="Rose D.J."/>
            <person name="Mayhew G.F."/>
            <person name="Evans P.S."/>
            <person name="Gregor J."/>
            <person name="Kirkpatrick H.A."/>
            <person name="Posfai G."/>
            <person name="Hackett J."/>
            <person name="Klink S."/>
            <person name="Boutin A."/>
            <person name="Shao Y."/>
            <person name="Miller L."/>
            <person name="Grotbeck E.J."/>
            <person name="Davis N.W."/>
            <person name="Lim A."/>
            <person name="Dimalanta E.T."/>
            <person name="Potamousis K."/>
            <person name="Apodaca J."/>
            <person name="Anantharaman T.S."/>
            <person name="Lin J."/>
            <person name="Yen G."/>
            <person name="Schwartz D.C."/>
            <person name="Welch R.A."/>
            <person name="Blattner F.R."/>
        </authorList>
    </citation>
    <scope>NUCLEOTIDE SEQUENCE [LARGE SCALE GENOMIC DNA]</scope>
    <source>
        <strain>O157:H7 / EDL933 / ATCC 700927 / EHEC</strain>
    </source>
</reference>
<reference key="2">
    <citation type="journal article" date="2001" name="DNA Res.">
        <title>Complete genome sequence of enterohemorrhagic Escherichia coli O157:H7 and genomic comparison with a laboratory strain K-12.</title>
        <authorList>
            <person name="Hayashi T."/>
            <person name="Makino K."/>
            <person name="Ohnishi M."/>
            <person name="Kurokawa K."/>
            <person name="Ishii K."/>
            <person name="Yokoyama K."/>
            <person name="Han C.-G."/>
            <person name="Ohtsubo E."/>
            <person name="Nakayama K."/>
            <person name="Murata T."/>
            <person name="Tanaka M."/>
            <person name="Tobe T."/>
            <person name="Iida T."/>
            <person name="Takami H."/>
            <person name="Honda T."/>
            <person name="Sasakawa C."/>
            <person name="Ogasawara N."/>
            <person name="Yasunaga T."/>
            <person name="Kuhara S."/>
            <person name="Shiba T."/>
            <person name="Hattori M."/>
            <person name="Shinagawa H."/>
        </authorList>
    </citation>
    <scope>NUCLEOTIDE SEQUENCE [LARGE SCALE GENOMIC DNA]</scope>
    <source>
        <strain>O157:H7 / Sakai / RIMD 0509952 / EHEC</strain>
    </source>
</reference>
<comment type="function">
    <text evidence="1">Catalyzes the last two sequential reactions in the de novo biosynthetic pathway for UDP-N-acetylglucosamine (UDP-GlcNAc). The C-terminal domain catalyzes the transfer of acetyl group from acetyl coenzyme A to glucosamine-1-phosphate (GlcN-1-P) to produce N-acetylglucosamine-1-phosphate (GlcNAc-1-P), which is converted into UDP-GlcNAc by the transfer of uridine 5-monophosphate (from uridine 5-triphosphate), a reaction catalyzed by the N-terminal domain.</text>
</comment>
<comment type="catalytic activity">
    <reaction evidence="1">
        <text>alpha-D-glucosamine 1-phosphate + acetyl-CoA = N-acetyl-alpha-D-glucosamine 1-phosphate + CoA + H(+)</text>
        <dbReference type="Rhea" id="RHEA:13725"/>
        <dbReference type="ChEBI" id="CHEBI:15378"/>
        <dbReference type="ChEBI" id="CHEBI:57287"/>
        <dbReference type="ChEBI" id="CHEBI:57288"/>
        <dbReference type="ChEBI" id="CHEBI:57776"/>
        <dbReference type="ChEBI" id="CHEBI:58516"/>
        <dbReference type="EC" id="2.3.1.157"/>
    </reaction>
</comment>
<comment type="catalytic activity">
    <reaction evidence="1">
        <text>N-acetyl-alpha-D-glucosamine 1-phosphate + UTP + H(+) = UDP-N-acetyl-alpha-D-glucosamine + diphosphate</text>
        <dbReference type="Rhea" id="RHEA:13509"/>
        <dbReference type="ChEBI" id="CHEBI:15378"/>
        <dbReference type="ChEBI" id="CHEBI:33019"/>
        <dbReference type="ChEBI" id="CHEBI:46398"/>
        <dbReference type="ChEBI" id="CHEBI:57705"/>
        <dbReference type="ChEBI" id="CHEBI:57776"/>
        <dbReference type="EC" id="2.7.7.23"/>
    </reaction>
</comment>
<comment type="cofactor">
    <cofactor evidence="1">
        <name>Mg(2+)</name>
        <dbReference type="ChEBI" id="CHEBI:18420"/>
    </cofactor>
    <text evidence="1">Binds 1 Mg(2+) ion per subunit.</text>
</comment>
<comment type="pathway">
    <text evidence="1">Nucleotide-sugar biosynthesis; UDP-N-acetyl-alpha-D-glucosamine biosynthesis; N-acetyl-alpha-D-glucosamine 1-phosphate from alpha-D-glucosamine 6-phosphate (route II): step 2/2.</text>
</comment>
<comment type="pathway">
    <text evidence="1">Nucleotide-sugar biosynthesis; UDP-N-acetyl-alpha-D-glucosamine biosynthesis; UDP-N-acetyl-alpha-D-glucosamine from N-acetyl-alpha-D-glucosamine 1-phosphate: step 1/1.</text>
</comment>
<comment type="pathway">
    <text evidence="1">Bacterial outer membrane biogenesis; LPS lipid A biosynthesis.</text>
</comment>
<comment type="subunit">
    <text evidence="1">Homotrimer.</text>
</comment>
<comment type="subcellular location">
    <subcellularLocation>
        <location evidence="1">Cytoplasm</location>
    </subcellularLocation>
</comment>
<comment type="similarity">
    <text evidence="1">In the N-terminal section; belongs to the N-acetylglucosamine-1-phosphate uridyltransferase family.</text>
</comment>
<comment type="similarity">
    <text evidence="1">In the C-terminal section; belongs to the transferase hexapeptide repeat family.</text>
</comment>
<evidence type="ECO:0000255" key="1">
    <source>
        <dbReference type="HAMAP-Rule" id="MF_01631"/>
    </source>
</evidence>
<keyword id="KW-0012">Acyltransferase</keyword>
<keyword id="KW-0133">Cell shape</keyword>
<keyword id="KW-0961">Cell wall biogenesis/degradation</keyword>
<keyword id="KW-0963">Cytoplasm</keyword>
<keyword id="KW-0460">Magnesium</keyword>
<keyword id="KW-0479">Metal-binding</keyword>
<keyword id="KW-0511">Multifunctional enzyme</keyword>
<keyword id="KW-0548">Nucleotidyltransferase</keyword>
<keyword id="KW-0573">Peptidoglycan synthesis</keyword>
<keyword id="KW-1185">Reference proteome</keyword>
<keyword id="KW-0677">Repeat</keyword>
<keyword id="KW-0808">Transferase</keyword>
<gene>
    <name evidence="1" type="primary">glmU</name>
    <name type="ordered locus">Z5228</name>
    <name type="ordered locus">ECs4672</name>
</gene>
<feature type="chain" id="PRO_0000068702" description="Bifunctional protein GlmU">
    <location>
        <begin position="1"/>
        <end position="456"/>
    </location>
</feature>
<feature type="region of interest" description="Pyrophosphorylase" evidence="1">
    <location>
        <begin position="1"/>
        <end position="229"/>
    </location>
</feature>
<feature type="region of interest" description="Linker" evidence="1">
    <location>
        <begin position="230"/>
        <end position="250"/>
    </location>
</feature>
<feature type="region of interest" description="N-acetyltransferase" evidence="1">
    <location>
        <begin position="251"/>
        <end position="456"/>
    </location>
</feature>
<feature type="active site" description="Proton acceptor" evidence="1">
    <location>
        <position position="363"/>
    </location>
</feature>
<feature type="binding site" evidence="1">
    <location>
        <begin position="11"/>
        <end position="14"/>
    </location>
    <ligand>
        <name>UDP-N-acetyl-alpha-D-glucosamine</name>
        <dbReference type="ChEBI" id="CHEBI:57705"/>
    </ligand>
</feature>
<feature type="binding site" evidence="1">
    <location>
        <position position="25"/>
    </location>
    <ligand>
        <name>UDP-N-acetyl-alpha-D-glucosamine</name>
        <dbReference type="ChEBI" id="CHEBI:57705"/>
    </ligand>
</feature>
<feature type="binding site" evidence="1">
    <location>
        <position position="76"/>
    </location>
    <ligand>
        <name>UDP-N-acetyl-alpha-D-glucosamine</name>
        <dbReference type="ChEBI" id="CHEBI:57705"/>
    </ligand>
</feature>
<feature type="binding site" evidence="1">
    <location>
        <begin position="81"/>
        <end position="82"/>
    </location>
    <ligand>
        <name>UDP-N-acetyl-alpha-D-glucosamine</name>
        <dbReference type="ChEBI" id="CHEBI:57705"/>
    </ligand>
</feature>
<feature type="binding site" evidence="1">
    <location>
        <begin position="103"/>
        <end position="105"/>
    </location>
    <ligand>
        <name>UDP-N-acetyl-alpha-D-glucosamine</name>
        <dbReference type="ChEBI" id="CHEBI:57705"/>
    </ligand>
</feature>
<feature type="binding site" evidence="1">
    <location>
        <position position="105"/>
    </location>
    <ligand>
        <name>Mg(2+)</name>
        <dbReference type="ChEBI" id="CHEBI:18420"/>
    </ligand>
</feature>
<feature type="binding site" evidence="1">
    <location>
        <position position="140"/>
    </location>
    <ligand>
        <name>UDP-N-acetyl-alpha-D-glucosamine</name>
        <dbReference type="ChEBI" id="CHEBI:57705"/>
    </ligand>
</feature>
<feature type="binding site" evidence="1">
    <location>
        <position position="154"/>
    </location>
    <ligand>
        <name>UDP-N-acetyl-alpha-D-glucosamine</name>
        <dbReference type="ChEBI" id="CHEBI:57705"/>
    </ligand>
</feature>
<feature type="binding site" evidence="1">
    <location>
        <position position="169"/>
    </location>
    <ligand>
        <name>UDP-N-acetyl-alpha-D-glucosamine</name>
        <dbReference type="ChEBI" id="CHEBI:57705"/>
    </ligand>
</feature>
<feature type="binding site" evidence="1">
    <location>
        <position position="227"/>
    </location>
    <ligand>
        <name>Mg(2+)</name>
        <dbReference type="ChEBI" id="CHEBI:18420"/>
    </ligand>
</feature>
<feature type="binding site" evidence="1">
    <location>
        <position position="227"/>
    </location>
    <ligand>
        <name>UDP-N-acetyl-alpha-D-glucosamine</name>
        <dbReference type="ChEBI" id="CHEBI:57705"/>
    </ligand>
</feature>
<feature type="binding site" evidence="1">
    <location>
        <position position="333"/>
    </location>
    <ligand>
        <name>UDP-N-acetyl-alpha-D-glucosamine</name>
        <dbReference type="ChEBI" id="CHEBI:57705"/>
    </ligand>
</feature>
<feature type="binding site" evidence="1">
    <location>
        <position position="351"/>
    </location>
    <ligand>
        <name>UDP-N-acetyl-alpha-D-glucosamine</name>
        <dbReference type="ChEBI" id="CHEBI:57705"/>
    </ligand>
</feature>
<feature type="binding site" evidence="1">
    <location>
        <position position="366"/>
    </location>
    <ligand>
        <name>UDP-N-acetyl-alpha-D-glucosamine</name>
        <dbReference type="ChEBI" id="CHEBI:57705"/>
    </ligand>
</feature>
<feature type="binding site" evidence="1">
    <location>
        <position position="377"/>
    </location>
    <ligand>
        <name>UDP-N-acetyl-alpha-D-glucosamine</name>
        <dbReference type="ChEBI" id="CHEBI:57705"/>
    </ligand>
</feature>
<feature type="binding site" evidence="1">
    <location>
        <position position="380"/>
    </location>
    <ligand>
        <name>acetyl-CoA</name>
        <dbReference type="ChEBI" id="CHEBI:57288"/>
    </ligand>
</feature>
<feature type="binding site" evidence="1">
    <location>
        <begin position="386"/>
        <end position="387"/>
    </location>
    <ligand>
        <name>acetyl-CoA</name>
        <dbReference type="ChEBI" id="CHEBI:57288"/>
    </ligand>
</feature>
<feature type="binding site" evidence="1">
    <location>
        <position position="405"/>
    </location>
    <ligand>
        <name>acetyl-CoA</name>
        <dbReference type="ChEBI" id="CHEBI:57288"/>
    </ligand>
</feature>
<feature type="binding site" evidence="1">
    <location>
        <position position="423"/>
    </location>
    <ligand>
        <name>acetyl-CoA</name>
        <dbReference type="ChEBI" id="CHEBI:57288"/>
    </ligand>
</feature>
<feature type="binding site" evidence="1">
    <location>
        <position position="440"/>
    </location>
    <ligand>
        <name>acetyl-CoA</name>
        <dbReference type="ChEBI" id="CHEBI:57288"/>
    </ligand>
</feature>
<name>GLMU_ECO57</name>